<sequence length="226" mass="25586">MGISDNDVQKQLRHMMAFIEQEANEKAEEIDAKAEEEFNIEKGRLVQQQRQKIMEFFEKKEKQVELQRKIQASNSLNAGRLRCLKAREDHIGAVLDEARSNLSRISGDAARYPAILKGLVMQGLLQLLEKEVVLRCREKDLRLVEQLLPECLDGLQKEWGSTTKVVLDKQNFLPSESAGGVELSARAGKIKVSSTLESRLELIANQIVPQVRTALFGPNPNRSFFD</sequence>
<name>VATE_CAEEL</name>
<keyword id="KW-1003">Cell membrane</keyword>
<keyword id="KW-0963">Cytoplasm</keyword>
<keyword id="KW-0406">Ion transport</keyword>
<keyword id="KW-0472">Membrane</keyword>
<keyword id="KW-1185">Reference proteome</keyword>
<keyword id="KW-0813">Transport</keyword>
<comment type="function">
    <text evidence="1 2 3 4">Subunit of the V1 complex of vacuolar(H+)-ATPase (V-ATPase), a multisubunit enzyme composed of a peripheral complex (V1) that hydrolyzes ATP and a membrane integral complex (V0) that translocates protons (By similarity). V-ATPase is responsible for acidifying and maintaining the pH of intracellular compartments and in some cell types, is targeted to the plasma membrane, where it is responsible for acidifying the extracellular environment (By similarity). Regulates pH homeostasis in the intestine (PubMed:16684534). Probably by regulating cytoplasmic pH, required for cell survival in the intestine and hypodermis (PubMed:16684534). Involved in receptor-mediated endocytosis (PubMed:12853134, PubMed:16785323). Involved in embryogenesis and larval development (PubMed:12853134, PubMed:16785323).</text>
</comment>
<comment type="subunit">
    <text evidence="1">V-ATPase is a heteromultimeric enzyme made up of two complexes: the ATP-hydrolytic V1 complex and the proton translocation V0 complex. The V1 complex consists of three catalytic AB heterodimers that form a heterohexamer, three peripheral stalks each consisting of EG heterodimers, one central rotor including subunits D and F, and the regulatory subunits C and H. The proton translocation complex V0 consists of the proton transport subunit a, a ring of proteolipid subunits c9c'', rotary subunit d, subunits e and f, and the accessory subunits vah-19/Ac45 and vah-20/PRR.</text>
</comment>
<comment type="subcellular location">
    <subcellularLocation>
        <location evidence="2">Cytoplasm</location>
    </subcellularLocation>
    <subcellularLocation>
        <location evidence="2 4">Apical cell membrane</location>
        <topology evidence="6">Peripheral membrane protein</topology>
    </subcellularLocation>
    <text evidence="2 4">Localizes in clusters in the cytoplasm of the excretory canal (PubMed:12853134). Colocalizes with vha-5 to stacked sheets of the apical cell membrane of syncytial hypodermal cells (PubMed:12853134, PubMed:16785323).</text>
</comment>
<comment type="tissue specificity">
    <text evidence="2 3 4">Expressed in the excretory cell and syncytial hypodermal cells (at protein level) (PubMed:12853134, PubMed:16684534, PubMed:16785323). Expressed in the intestine (at protein level) (PubMed:16684534).</text>
</comment>
<comment type="developmental stage">
    <text evidence="2 3">Expressed in embryos, larvae and adults (at protein level) (PubMed:12853134, PubMed:16684534). Expressed in the excretory cell, intestine and hypodermis throughout all developmental stages and in adults (at protein level) (PubMed:12853134, PubMed:16684534).</text>
</comment>
<comment type="disruption phenotype">
    <text evidence="2 3 4">Larvae are arrested at the L1 stage (PubMed:16684534). Larvae exhibit swollen vacuoles in the hypodermis of the head region, gradually spreading throughout the whole body (PubMed:16684534). Pharyngeal pumping ceases at L2 larval stage with many vacuoles covering the entire body (PubMed:16684534). Causes necrotic cell death in intestine and hypodermis (PubMed:16684534). RNAi-mediated knockdown causes sterility, formation of endomitotic oocytes in the proximal gonads, and impaired ovulation (PubMed:12853134). Diakinesis stage oocytes are displaced toward distal gonads (PubMed:12853134). Impaired yolk uptake by the oocytes from the pseudoceolomic cavities (PubMed:12853134, PubMed:16785323). Impaired acidification and food digestion of the intestine (PubMed:16684534). Causes an increase in the section of the excretory canal, which often has multiple lumens and abnormal whorls (PubMed:16785323). Does not affect alae formation in larvae (PubMed:16785323). Progeny is arrested at the embryonic stage or at the L1 larval stage (PubMed:12853134, PubMed:16785323). RNAi-mediated knockdown in embryos causes arrest at the one-cell stage (PubMed:12853134).</text>
</comment>
<comment type="similarity">
    <text evidence="6">Belongs to the V-ATPase E subunit family.</text>
</comment>
<gene>
    <name evidence="5 8" type="primary">vha-8</name>
    <name evidence="8" type="ORF">C17H12.14</name>
</gene>
<organism evidence="7">
    <name type="scientific">Caenorhabditis elegans</name>
    <dbReference type="NCBI Taxonomy" id="6239"/>
    <lineage>
        <taxon>Eukaryota</taxon>
        <taxon>Metazoa</taxon>
        <taxon>Ecdysozoa</taxon>
        <taxon>Nematoda</taxon>
        <taxon>Chromadorea</taxon>
        <taxon>Rhabditida</taxon>
        <taxon>Rhabditina</taxon>
        <taxon>Rhabditomorpha</taxon>
        <taxon>Rhabditoidea</taxon>
        <taxon>Rhabditidae</taxon>
        <taxon>Peloderinae</taxon>
        <taxon>Caenorhabditis</taxon>
    </lineage>
</organism>
<protein>
    <recommendedName>
        <fullName evidence="6">V-type proton ATPase subunit E</fullName>
        <shortName evidence="5">V-ATPase subunit E</shortName>
    </recommendedName>
</protein>
<reference evidence="7" key="1">
    <citation type="journal article" date="1998" name="Science">
        <title>Genome sequence of the nematode C. elegans: a platform for investigating biology.</title>
        <authorList>
            <consortium name="The C. elegans sequencing consortium"/>
        </authorList>
    </citation>
    <scope>NUCLEOTIDE SEQUENCE [LARGE SCALE GENOMIC DNA]</scope>
    <source>
        <strain evidence="7">Bristol N2</strain>
    </source>
</reference>
<reference evidence="6" key="2">
    <citation type="journal article" date="2003" name="Gene">
        <title>Vacuolar-type H+-ATPase E subunit is required for embryogenesis and yolk transfer in Caenorhabditis elegans.</title>
        <authorList>
            <person name="Choi K.Y."/>
            <person name="Ji Y.J."/>
            <person name="Dhakal B.K."/>
            <person name="Yu J.R."/>
            <person name="Cho C."/>
            <person name="Song W.K."/>
            <person name="Ahnn J."/>
        </authorList>
    </citation>
    <scope>FUNCTION</scope>
    <scope>SUBCELLULAR LOCATION</scope>
    <scope>TISSUE SPECIFICITY</scope>
    <scope>DEVELOPMENTAL STAGE</scope>
    <scope>DISRUPTION PHENOTYPE</scope>
</reference>
<reference evidence="6" key="3">
    <citation type="journal article" date="2006" name="FEBS Lett.">
        <title>VHA-8, the E subunit of V-ATPase, is essential for pH homeostasis and larval development in C. elegans.</title>
        <authorList>
            <person name="Ji Y.J."/>
            <person name="Choi K.Y."/>
            <person name="Song H.O."/>
            <person name="Park B.J."/>
            <person name="Yu J.R."/>
            <person name="Kagawa H."/>
            <person name="Song W.K."/>
            <person name="Ahnn J."/>
        </authorList>
    </citation>
    <scope>FUNCTION</scope>
    <scope>TISSUE SPECIFICITY</scope>
    <scope>DEVELOPMENTAL STAGE</scope>
    <scope>DISRUPTION PHENOTYPE</scope>
</reference>
<reference evidence="6" key="4">
    <citation type="journal article" date="2006" name="J. Cell Biol.">
        <title>The V0-ATPase mediates apical secretion of exosomes containing Hedgehog-related proteins in Caenorhabditis elegans.</title>
        <authorList>
            <person name="Liegeois S."/>
            <person name="Benedetto A."/>
            <person name="Garnier J.M."/>
            <person name="Schwab Y."/>
            <person name="Labouesse M."/>
        </authorList>
    </citation>
    <scope>FUNCTION</scope>
    <scope>SUBCELLULAR LOCATION</scope>
    <scope>TISSUE SPECIFICITY</scope>
    <scope>DISRUPTION PHENOTYPE</scope>
</reference>
<proteinExistence type="evidence at protein level"/>
<feature type="chain" id="PRO_0000454078" description="V-type proton ATPase subunit E">
    <location>
        <begin position="1"/>
        <end position="226"/>
    </location>
</feature>
<evidence type="ECO:0000250" key="1">
    <source>
        <dbReference type="UniProtKB" id="P11019"/>
    </source>
</evidence>
<evidence type="ECO:0000269" key="2">
    <source>
    </source>
</evidence>
<evidence type="ECO:0000269" key="3">
    <source>
    </source>
</evidence>
<evidence type="ECO:0000269" key="4">
    <source>
    </source>
</evidence>
<evidence type="ECO:0000303" key="5">
    <source>
    </source>
</evidence>
<evidence type="ECO:0000305" key="6"/>
<evidence type="ECO:0000312" key="7">
    <source>
        <dbReference type="Proteomes" id="UP000001940"/>
    </source>
</evidence>
<evidence type="ECO:0000312" key="8">
    <source>
        <dbReference type="WormBase" id="C17H12.14"/>
    </source>
</evidence>
<accession>Q95X44</accession>
<dbReference type="EMBL" id="BX284604">
    <property type="protein sequence ID" value="CCD65002.1"/>
    <property type="molecule type" value="Genomic_DNA"/>
</dbReference>
<dbReference type="RefSeq" id="NP_501040.1">
    <property type="nucleotide sequence ID" value="NM_068639.8"/>
</dbReference>
<dbReference type="SMR" id="Q95X44"/>
<dbReference type="DIP" id="DIP-24784N"/>
<dbReference type="FunCoup" id="Q95X44">
    <property type="interactions" value="1813"/>
</dbReference>
<dbReference type="IntAct" id="Q95X44">
    <property type="interactions" value="5"/>
</dbReference>
<dbReference type="STRING" id="6239.C17H12.14.1"/>
<dbReference type="TCDB" id="3.A.2.2.7">
    <property type="family name" value="the h+- or na+-translocating f-type, v-type and a-type atpase (f-atpase) superfamily"/>
</dbReference>
<dbReference type="PaxDb" id="6239-C17H12.14"/>
<dbReference type="PeptideAtlas" id="Q95X44"/>
<dbReference type="EnsemblMetazoa" id="C17H12.14.1">
    <property type="protein sequence ID" value="C17H12.14.1"/>
    <property type="gene ID" value="WBGene00006917"/>
</dbReference>
<dbReference type="GeneID" id="177442"/>
<dbReference type="KEGG" id="cel:CELE_C17H12.14"/>
<dbReference type="UCSC" id="C17H12.14.1">
    <property type="organism name" value="c. elegans"/>
</dbReference>
<dbReference type="AGR" id="WB:WBGene00006917"/>
<dbReference type="CTD" id="177442"/>
<dbReference type="WormBase" id="C17H12.14">
    <property type="protein sequence ID" value="CE19362"/>
    <property type="gene ID" value="WBGene00006917"/>
    <property type="gene designation" value="vha-8"/>
</dbReference>
<dbReference type="eggNOG" id="KOG1664">
    <property type="taxonomic scope" value="Eukaryota"/>
</dbReference>
<dbReference type="GeneTree" id="ENSGT00390000002730"/>
<dbReference type="HOGENOM" id="CLU_073641_2_0_1"/>
<dbReference type="InParanoid" id="Q95X44"/>
<dbReference type="OMA" id="QHMMAFI"/>
<dbReference type="OrthoDB" id="10263003at2759"/>
<dbReference type="PhylomeDB" id="Q95X44"/>
<dbReference type="Reactome" id="R-CEL-1222556">
    <property type="pathway name" value="ROS and RNS production in phagocytes"/>
</dbReference>
<dbReference type="Reactome" id="R-CEL-77387">
    <property type="pathway name" value="Insulin receptor recycling"/>
</dbReference>
<dbReference type="Reactome" id="R-CEL-917977">
    <property type="pathway name" value="Transferrin endocytosis and recycling"/>
</dbReference>
<dbReference type="Reactome" id="R-CEL-9639288">
    <property type="pathway name" value="Amino acids regulate mTORC1"/>
</dbReference>
<dbReference type="Reactome" id="R-CEL-983712">
    <property type="pathway name" value="Ion channel transport"/>
</dbReference>
<dbReference type="PRO" id="PR:Q95X44"/>
<dbReference type="Proteomes" id="UP000001940">
    <property type="component" value="Chromosome IV"/>
</dbReference>
<dbReference type="Bgee" id="WBGene00006917">
    <property type="expression patterns" value="Expressed in larva and 4 other cell types or tissues"/>
</dbReference>
<dbReference type="GO" id="GO:0016324">
    <property type="term" value="C:apical plasma membrane"/>
    <property type="evidence" value="ECO:0000314"/>
    <property type="project" value="WormBase"/>
</dbReference>
<dbReference type="GO" id="GO:0005737">
    <property type="term" value="C:cytoplasm"/>
    <property type="evidence" value="ECO:0000314"/>
    <property type="project" value="WormBase"/>
</dbReference>
<dbReference type="GO" id="GO:0005886">
    <property type="term" value="C:plasma membrane"/>
    <property type="evidence" value="ECO:0000314"/>
    <property type="project" value="WormBase"/>
</dbReference>
<dbReference type="GO" id="GO:0033178">
    <property type="term" value="C:proton-transporting two-sector ATPase complex, catalytic domain"/>
    <property type="evidence" value="ECO:0007669"/>
    <property type="project" value="InterPro"/>
</dbReference>
<dbReference type="GO" id="GO:0046961">
    <property type="term" value="F:proton-transporting ATPase activity, rotational mechanism"/>
    <property type="evidence" value="ECO:0000318"/>
    <property type="project" value="GO_Central"/>
</dbReference>
<dbReference type="FunFam" id="3.30.2320.30:FF:000001">
    <property type="entry name" value="V-type proton atpase subunit e 1"/>
    <property type="match status" value="1"/>
</dbReference>
<dbReference type="Gene3D" id="6.10.250.1620">
    <property type="match status" value="1"/>
</dbReference>
<dbReference type="Gene3D" id="3.30.2320.30">
    <property type="entry name" value="ATP synthase, E subunit, C-terminal"/>
    <property type="match status" value="1"/>
</dbReference>
<dbReference type="HAMAP" id="MF_00311">
    <property type="entry name" value="ATP_synth_E_arch"/>
    <property type="match status" value="1"/>
</dbReference>
<dbReference type="InterPro" id="IPR038495">
    <property type="entry name" value="ATPase_E_C"/>
</dbReference>
<dbReference type="InterPro" id="IPR002842">
    <property type="entry name" value="ATPase_V1_Esu"/>
</dbReference>
<dbReference type="PANTHER" id="PTHR45715">
    <property type="entry name" value="ATPASE H+-TRANSPORTING V1 SUBUNIT E1A-RELATED"/>
    <property type="match status" value="1"/>
</dbReference>
<dbReference type="Pfam" id="PF01991">
    <property type="entry name" value="vATP-synt_E"/>
    <property type="match status" value="1"/>
</dbReference>
<dbReference type="SUPFAM" id="SSF160527">
    <property type="entry name" value="V-type ATPase subunit E-like"/>
    <property type="match status" value="1"/>
</dbReference>